<organism>
    <name type="scientific">Bacillus cereus (strain AH187)</name>
    <dbReference type="NCBI Taxonomy" id="405534"/>
    <lineage>
        <taxon>Bacteria</taxon>
        <taxon>Bacillati</taxon>
        <taxon>Bacillota</taxon>
        <taxon>Bacilli</taxon>
        <taxon>Bacillales</taxon>
        <taxon>Bacillaceae</taxon>
        <taxon>Bacillus</taxon>
        <taxon>Bacillus cereus group</taxon>
    </lineage>
</organism>
<proteinExistence type="inferred from homology"/>
<keyword id="KW-0450">Lipoyl</keyword>
<dbReference type="EMBL" id="CP001177">
    <property type="protein sequence ID" value="ACJ79186.1"/>
    <property type="molecule type" value="Genomic_DNA"/>
</dbReference>
<dbReference type="SMR" id="B7HUY1"/>
<dbReference type="KEGG" id="bcr:BCAH187_A5133"/>
<dbReference type="HOGENOM" id="CLU_097408_2_2_9"/>
<dbReference type="Proteomes" id="UP000002214">
    <property type="component" value="Chromosome"/>
</dbReference>
<dbReference type="GO" id="GO:0005829">
    <property type="term" value="C:cytosol"/>
    <property type="evidence" value="ECO:0007669"/>
    <property type="project" value="TreeGrafter"/>
</dbReference>
<dbReference type="GO" id="GO:0005960">
    <property type="term" value="C:glycine cleavage complex"/>
    <property type="evidence" value="ECO:0007669"/>
    <property type="project" value="InterPro"/>
</dbReference>
<dbReference type="GO" id="GO:0019464">
    <property type="term" value="P:glycine decarboxylation via glycine cleavage system"/>
    <property type="evidence" value="ECO:0007669"/>
    <property type="project" value="UniProtKB-UniRule"/>
</dbReference>
<dbReference type="CDD" id="cd06848">
    <property type="entry name" value="GCS_H"/>
    <property type="match status" value="1"/>
</dbReference>
<dbReference type="Gene3D" id="2.40.50.100">
    <property type="match status" value="1"/>
</dbReference>
<dbReference type="HAMAP" id="MF_00272">
    <property type="entry name" value="GcvH"/>
    <property type="match status" value="1"/>
</dbReference>
<dbReference type="InterPro" id="IPR003016">
    <property type="entry name" value="2-oxoA_DH_lipoyl-BS"/>
</dbReference>
<dbReference type="InterPro" id="IPR000089">
    <property type="entry name" value="Biotin_lipoyl"/>
</dbReference>
<dbReference type="InterPro" id="IPR002930">
    <property type="entry name" value="GCV_H"/>
</dbReference>
<dbReference type="InterPro" id="IPR033753">
    <property type="entry name" value="GCV_H/Fam206"/>
</dbReference>
<dbReference type="InterPro" id="IPR017453">
    <property type="entry name" value="GCV_H_sub"/>
</dbReference>
<dbReference type="InterPro" id="IPR011053">
    <property type="entry name" value="Single_hybrid_motif"/>
</dbReference>
<dbReference type="NCBIfam" id="TIGR00527">
    <property type="entry name" value="gcvH"/>
    <property type="match status" value="1"/>
</dbReference>
<dbReference type="NCBIfam" id="NF002270">
    <property type="entry name" value="PRK01202.1"/>
    <property type="match status" value="1"/>
</dbReference>
<dbReference type="PANTHER" id="PTHR11715">
    <property type="entry name" value="GLYCINE CLEAVAGE SYSTEM H PROTEIN"/>
    <property type="match status" value="1"/>
</dbReference>
<dbReference type="PANTHER" id="PTHR11715:SF3">
    <property type="entry name" value="GLYCINE CLEAVAGE SYSTEM H PROTEIN-RELATED"/>
    <property type="match status" value="1"/>
</dbReference>
<dbReference type="Pfam" id="PF01597">
    <property type="entry name" value="GCV_H"/>
    <property type="match status" value="1"/>
</dbReference>
<dbReference type="SUPFAM" id="SSF51230">
    <property type="entry name" value="Single hybrid motif"/>
    <property type="match status" value="1"/>
</dbReference>
<dbReference type="PROSITE" id="PS50968">
    <property type="entry name" value="BIOTINYL_LIPOYL"/>
    <property type="match status" value="1"/>
</dbReference>
<dbReference type="PROSITE" id="PS00189">
    <property type="entry name" value="LIPOYL"/>
    <property type="match status" value="1"/>
</dbReference>
<feature type="chain" id="PRO_1000119294" description="Glycine cleavage system H protein">
    <location>
        <begin position="1"/>
        <end position="127"/>
    </location>
</feature>
<feature type="domain" description="Lipoyl-binding" evidence="2">
    <location>
        <begin position="22"/>
        <end position="104"/>
    </location>
</feature>
<feature type="modified residue" description="N6-lipoyllysine" evidence="1">
    <location>
        <position position="63"/>
    </location>
</feature>
<reference key="1">
    <citation type="submission" date="2008-10" db="EMBL/GenBank/DDBJ databases">
        <title>Genome sequence of Bacillus cereus AH187.</title>
        <authorList>
            <person name="Dodson R.J."/>
            <person name="Durkin A.S."/>
            <person name="Rosovitz M.J."/>
            <person name="Rasko D.A."/>
            <person name="Kolsto A.B."/>
            <person name="Okstad O.A."/>
            <person name="Ravel J."/>
            <person name="Sutton G."/>
        </authorList>
    </citation>
    <scope>NUCLEOTIDE SEQUENCE [LARGE SCALE GENOMIC DNA]</scope>
    <source>
        <strain>AH187</strain>
    </source>
</reference>
<name>GCSH_BACC7</name>
<protein>
    <recommendedName>
        <fullName evidence="1">Glycine cleavage system H protein</fullName>
    </recommendedName>
    <alternativeName>
        <fullName evidence="1">Octanoyl/lipoyl carrier protein</fullName>
    </alternativeName>
</protein>
<sequence>MSIPNNLRYSEEHEWVKTEGNEVVIGITHFAQSELGDIVFVELPEVGATIEADEPFGSVESVKTVSELYAPVSGKVVAVNEELSDQPELVNESPYEGAWMVKVELSDASQVEKLLTAEKYAEMTNQD</sequence>
<accession>B7HUY1</accession>
<gene>
    <name evidence="1" type="primary">gcvH</name>
    <name type="ordered locus">BCAH187_A5133</name>
</gene>
<evidence type="ECO:0000255" key="1">
    <source>
        <dbReference type="HAMAP-Rule" id="MF_00272"/>
    </source>
</evidence>
<evidence type="ECO:0000255" key="2">
    <source>
        <dbReference type="PROSITE-ProRule" id="PRU01066"/>
    </source>
</evidence>
<comment type="function">
    <text evidence="1">The glycine cleavage system catalyzes the degradation of glycine. The H protein shuttles the methylamine group of glycine from the P protein to the T protein.</text>
</comment>
<comment type="function">
    <text evidence="1">Is also involved in protein lipoylation via its role as an octanoyl/lipoyl carrier protein intermediate.</text>
</comment>
<comment type="cofactor">
    <cofactor evidence="1">
        <name>(R)-lipoate</name>
        <dbReference type="ChEBI" id="CHEBI:83088"/>
    </cofactor>
    <text evidence="1">Binds 1 lipoyl cofactor covalently.</text>
</comment>
<comment type="subunit">
    <text evidence="1">The glycine cleavage system is composed of four proteins: P, T, L and H.</text>
</comment>
<comment type="similarity">
    <text evidence="1">Belongs to the GcvH family.</text>
</comment>